<proteinExistence type="inferred from homology"/>
<feature type="chain" id="PRO_1000200507" description="Uridine kinase">
    <location>
        <begin position="1"/>
        <end position="206"/>
    </location>
</feature>
<feature type="binding site" evidence="1">
    <location>
        <begin position="9"/>
        <end position="16"/>
    </location>
    <ligand>
        <name>ATP</name>
        <dbReference type="ChEBI" id="CHEBI:30616"/>
    </ligand>
</feature>
<protein>
    <recommendedName>
        <fullName evidence="1">Uridine kinase</fullName>
        <ecNumber evidence="1">2.7.1.48</ecNumber>
    </recommendedName>
    <alternativeName>
        <fullName evidence="1">Cytidine monophosphokinase</fullName>
    </alternativeName>
    <alternativeName>
        <fullName evidence="1">Uridine monophosphokinase</fullName>
    </alternativeName>
</protein>
<keyword id="KW-0067">ATP-binding</keyword>
<keyword id="KW-0963">Cytoplasm</keyword>
<keyword id="KW-0418">Kinase</keyword>
<keyword id="KW-0547">Nucleotide-binding</keyword>
<keyword id="KW-1185">Reference proteome</keyword>
<keyword id="KW-0808">Transferase</keyword>
<accession>A1QYG8</accession>
<comment type="catalytic activity">
    <reaction evidence="1">
        <text>uridine + ATP = UMP + ADP + H(+)</text>
        <dbReference type="Rhea" id="RHEA:16825"/>
        <dbReference type="ChEBI" id="CHEBI:15378"/>
        <dbReference type="ChEBI" id="CHEBI:16704"/>
        <dbReference type="ChEBI" id="CHEBI:30616"/>
        <dbReference type="ChEBI" id="CHEBI:57865"/>
        <dbReference type="ChEBI" id="CHEBI:456216"/>
        <dbReference type="EC" id="2.7.1.48"/>
    </reaction>
</comment>
<comment type="catalytic activity">
    <reaction evidence="1">
        <text>cytidine + ATP = CMP + ADP + H(+)</text>
        <dbReference type="Rhea" id="RHEA:24674"/>
        <dbReference type="ChEBI" id="CHEBI:15378"/>
        <dbReference type="ChEBI" id="CHEBI:17562"/>
        <dbReference type="ChEBI" id="CHEBI:30616"/>
        <dbReference type="ChEBI" id="CHEBI:60377"/>
        <dbReference type="ChEBI" id="CHEBI:456216"/>
        <dbReference type="EC" id="2.7.1.48"/>
    </reaction>
</comment>
<comment type="pathway">
    <text evidence="1">Pyrimidine metabolism; CTP biosynthesis via salvage pathway; CTP from cytidine: step 1/3.</text>
</comment>
<comment type="pathway">
    <text evidence="1">Pyrimidine metabolism; UMP biosynthesis via salvage pathway; UMP from uridine: step 1/1.</text>
</comment>
<comment type="subcellular location">
    <subcellularLocation>
        <location evidence="1">Cytoplasm</location>
    </subcellularLocation>
</comment>
<comment type="similarity">
    <text evidence="1">Belongs to the uridine kinase family.</text>
</comment>
<reference key="1">
    <citation type="submission" date="2004-12" db="EMBL/GenBank/DDBJ databases">
        <title>The genome sequence of Borrelia hermsii and Borrelia turicatae: comparative analysis of two agents of endemic N. America relapsing fever.</title>
        <authorList>
            <person name="Porcella S.F."/>
            <person name="Raffel S.J."/>
            <person name="Schrumpf M.E."/>
            <person name="Montgomery B."/>
            <person name="Smith T."/>
            <person name="Schwan T.G."/>
        </authorList>
    </citation>
    <scope>NUCLEOTIDE SEQUENCE [LARGE SCALE GENOMIC DNA]</scope>
    <source>
        <strain>91E135</strain>
    </source>
</reference>
<gene>
    <name evidence="1" type="primary">udk</name>
    <name type="ordered locus">BT0015</name>
</gene>
<organism>
    <name type="scientific">Borrelia turicatae (strain 91E135)</name>
    <dbReference type="NCBI Taxonomy" id="314724"/>
    <lineage>
        <taxon>Bacteria</taxon>
        <taxon>Pseudomonadati</taxon>
        <taxon>Spirochaetota</taxon>
        <taxon>Spirochaetia</taxon>
        <taxon>Spirochaetales</taxon>
        <taxon>Borreliaceae</taxon>
        <taxon>Borrelia</taxon>
    </lineage>
</organism>
<evidence type="ECO:0000255" key="1">
    <source>
        <dbReference type="HAMAP-Rule" id="MF_00551"/>
    </source>
</evidence>
<name>URK_BORT9</name>
<dbReference type="EC" id="2.7.1.48" evidence="1"/>
<dbReference type="EMBL" id="CP000049">
    <property type="protein sequence ID" value="AAX17360.1"/>
    <property type="molecule type" value="Genomic_DNA"/>
</dbReference>
<dbReference type="RefSeq" id="WP_011771979.1">
    <property type="nucleotide sequence ID" value="NC_008710.1"/>
</dbReference>
<dbReference type="SMR" id="A1QYG8"/>
<dbReference type="KEGG" id="btu:BT0015"/>
<dbReference type="eggNOG" id="COG0572">
    <property type="taxonomic scope" value="Bacteria"/>
</dbReference>
<dbReference type="HOGENOM" id="CLU_021278_1_2_12"/>
<dbReference type="UniPathway" id="UPA00574">
    <property type="reaction ID" value="UER00637"/>
</dbReference>
<dbReference type="UniPathway" id="UPA00579">
    <property type="reaction ID" value="UER00640"/>
</dbReference>
<dbReference type="Proteomes" id="UP000001205">
    <property type="component" value="Chromosome"/>
</dbReference>
<dbReference type="GO" id="GO:0005737">
    <property type="term" value="C:cytoplasm"/>
    <property type="evidence" value="ECO:0007669"/>
    <property type="project" value="UniProtKB-SubCell"/>
</dbReference>
<dbReference type="GO" id="GO:0005524">
    <property type="term" value="F:ATP binding"/>
    <property type="evidence" value="ECO:0007669"/>
    <property type="project" value="UniProtKB-UniRule"/>
</dbReference>
<dbReference type="GO" id="GO:0043771">
    <property type="term" value="F:cytidine kinase activity"/>
    <property type="evidence" value="ECO:0007669"/>
    <property type="project" value="RHEA"/>
</dbReference>
<dbReference type="GO" id="GO:0004849">
    <property type="term" value="F:uridine kinase activity"/>
    <property type="evidence" value="ECO:0007669"/>
    <property type="project" value="UniProtKB-UniRule"/>
</dbReference>
<dbReference type="GO" id="GO:0044211">
    <property type="term" value="P:CTP salvage"/>
    <property type="evidence" value="ECO:0007669"/>
    <property type="project" value="UniProtKB-UniRule"/>
</dbReference>
<dbReference type="GO" id="GO:0044206">
    <property type="term" value="P:UMP salvage"/>
    <property type="evidence" value="ECO:0007669"/>
    <property type="project" value="UniProtKB-UniRule"/>
</dbReference>
<dbReference type="CDD" id="cd02023">
    <property type="entry name" value="UMPK"/>
    <property type="match status" value="1"/>
</dbReference>
<dbReference type="Gene3D" id="3.40.50.300">
    <property type="entry name" value="P-loop containing nucleotide triphosphate hydrolases"/>
    <property type="match status" value="1"/>
</dbReference>
<dbReference type="HAMAP" id="MF_00551">
    <property type="entry name" value="Uridine_kinase"/>
    <property type="match status" value="1"/>
</dbReference>
<dbReference type="InterPro" id="IPR027417">
    <property type="entry name" value="P-loop_NTPase"/>
</dbReference>
<dbReference type="InterPro" id="IPR006083">
    <property type="entry name" value="PRK/URK"/>
</dbReference>
<dbReference type="InterPro" id="IPR026008">
    <property type="entry name" value="Uridine_kinase"/>
</dbReference>
<dbReference type="InterPro" id="IPR000764">
    <property type="entry name" value="Uridine_kinase-like"/>
</dbReference>
<dbReference type="NCBIfam" id="NF004018">
    <property type="entry name" value="PRK05480.1"/>
    <property type="match status" value="1"/>
</dbReference>
<dbReference type="NCBIfam" id="TIGR00235">
    <property type="entry name" value="udk"/>
    <property type="match status" value="1"/>
</dbReference>
<dbReference type="PANTHER" id="PTHR10285">
    <property type="entry name" value="URIDINE KINASE"/>
    <property type="match status" value="1"/>
</dbReference>
<dbReference type="Pfam" id="PF00485">
    <property type="entry name" value="PRK"/>
    <property type="match status" value="1"/>
</dbReference>
<dbReference type="PRINTS" id="PR00988">
    <property type="entry name" value="URIDINKINASE"/>
</dbReference>
<dbReference type="SUPFAM" id="SSF52540">
    <property type="entry name" value="P-loop containing nucleoside triphosphate hydrolases"/>
    <property type="match status" value="1"/>
</dbReference>
<sequence length="206" mass="23969">MVKIIGITGGSGSGKTTVVNKISEVIPEFVLISQDNYYKSVGDYEYEFLDVNFDHPDAFDNNLFYKHLKKLKENKLIHMPLYDFINHKRKDETVEIVPTPVVIVEGIMIFVEERVRNLIDLKIYIDTPNDIRFIRRLERDMSKRGRTLESVIEQYLSTTRAGYYRFIEPTKEYADLIIPEGGHNDKALYVLSSFLRTLGQESSVFF</sequence>